<protein>
    <recommendedName>
        <fullName evidence="4">Maintenance of carboxysome distribution protein B</fullName>
        <shortName evidence="4">McdB</shortName>
    </recommendedName>
</protein>
<sequence>MSNNALDRLINKQKPKVPPRNDVVSESVSNDIKTQGQQELNTSLPPSDTKATPEEMPTSHESETSLSQDQKPKLSPDTFETVRNTIRIESEVDESLRQLCHEERITKETWLEAAYLYLCEKPEELAQVIQLAQERLSQRKAIADYKRAKTMQERFL</sequence>
<gene>
    <name evidence="4" type="primary">mcdB</name>
    <name evidence="6" type="ordered locus">PCC7424_5530</name>
</gene>
<keyword id="KW-0002">3D-structure</keyword>
<keyword id="KW-1283">Bacterial microcompartment</keyword>
<keyword id="KW-0120">Carbon dioxide fixation</keyword>
<keyword id="KW-1282">Carboxysome</keyword>
<keyword id="KW-0175">Coiled coil</keyword>
<keyword id="KW-0614">Plasmid</keyword>
<keyword id="KW-1185">Reference proteome</keyword>
<reference evidence="6" key="1">
    <citation type="journal article" date="2011" name="MBio">
        <title>Novel metabolic attributes of the genus Cyanothece, comprising a group of unicellular nitrogen-fixing Cyanobacteria.</title>
        <authorList>
            <person name="Bandyopadhyay A."/>
            <person name="Elvitigala T."/>
            <person name="Welsh E."/>
            <person name="Stockel J."/>
            <person name="Liberton M."/>
            <person name="Min H."/>
            <person name="Sherman L.A."/>
            <person name="Pakrasi H.B."/>
        </authorList>
    </citation>
    <scope>NUCLEOTIDE SEQUENCE [LARGE SCALE GENOMIC DNA]</scope>
    <source>
        <strain>PCC 7424</strain>
        <plasmid>pP742402</plasmid>
    </source>
</reference>
<reference key="2">
    <citation type="journal article" date="2020" name="Mol. Biol. Evol.">
        <title>Origin and Evolution of Carboxysome Positioning Systems in Cyanobacteria.</title>
        <authorList>
            <person name="MacCready J.S."/>
            <person name="Basalla J.L."/>
            <person name="Vecchiarelli A.G."/>
        </authorList>
    </citation>
    <scope>CLASSIFICATION</scope>
    <source>
        <strain>PCC 7424</strain>
    </source>
</reference>
<reference evidence="8" key="3">
    <citation type="journal article" date="2019" name="Nucleic Acids Res.">
        <title>Structures of maintenance of carboxysome distribution Walker-box McdA and McdB adaptor homologs.</title>
        <authorList>
            <person name="Schumacher M.A."/>
            <person name="Henderson M."/>
            <person name="Zhang H."/>
        </authorList>
    </citation>
    <scope>X-RAY CRYSTALLOGRAPHY (3.46 ANGSTROMS) OF 2-156</scope>
    <scope>SUBUNIT</scope>
    <scope>INTERACTION WITH MCDA</scope>
    <scope>DOMAIN</scope>
    <scope>COILED COIL</scope>
    <source>
        <strain>PCC 7424</strain>
        <plasmid>pP742402</plasmid>
    </source>
</reference>
<evidence type="ECO:0000250" key="1">
    <source>
        <dbReference type="UniProtKB" id="Q8GJM6"/>
    </source>
</evidence>
<evidence type="ECO:0000256" key="2">
    <source>
        <dbReference type="SAM" id="MobiDB-lite"/>
    </source>
</evidence>
<evidence type="ECO:0000269" key="3">
    <source>
    </source>
</evidence>
<evidence type="ECO:0000303" key="4">
    <source>
    </source>
</evidence>
<evidence type="ECO:0000303" key="5">
    <source>
    </source>
</evidence>
<evidence type="ECO:0000312" key="6">
    <source>
        <dbReference type="EMBL" id="ACK74097.1"/>
    </source>
</evidence>
<evidence type="ECO:0000312" key="7">
    <source>
        <dbReference type="PDB" id="6NOY"/>
    </source>
</evidence>
<evidence type="ECO:0007744" key="8">
    <source>
        <dbReference type="PDB" id="6NOY"/>
    </source>
</evidence>
<evidence type="ECO:0007829" key="9">
    <source>
        <dbReference type="PDB" id="6NOY"/>
    </source>
</evidence>
<dbReference type="EMBL" id="CP001293">
    <property type="protein sequence ID" value="ACK74097.1"/>
    <property type="molecule type" value="Genomic_DNA"/>
</dbReference>
<dbReference type="RefSeq" id="WP_012599602.1">
    <property type="nucleotide sequence ID" value="NC_011737.1"/>
</dbReference>
<dbReference type="PDB" id="6NOY">
    <property type="method" value="X-ray"/>
    <property type="resolution" value="3.46 A"/>
    <property type="chains" value="A/B/G/H=2-156"/>
</dbReference>
<dbReference type="PDBsum" id="6NOY"/>
<dbReference type="SMR" id="B7KMS5"/>
<dbReference type="KEGG" id="cyc:PCC7424_5530"/>
<dbReference type="HOGENOM" id="CLU_1683654_0_0_3"/>
<dbReference type="Proteomes" id="UP000002384">
    <property type="component" value="Plasmid pP742402"/>
</dbReference>
<dbReference type="GO" id="GO:0031470">
    <property type="term" value="C:carboxysome"/>
    <property type="evidence" value="ECO:0007669"/>
    <property type="project" value="UniProtKB-SubCell"/>
</dbReference>
<dbReference type="GO" id="GO:0015977">
    <property type="term" value="P:carbon fixation"/>
    <property type="evidence" value="ECO:0007669"/>
    <property type="project" value="UniProtKB-KW"/>
</dbReference>
<dbReference type="CDD" id="cd21138">
    <property type="entry name" value="McdB-like"/>
    <property type="match status" value="1"/>
</dbReference>
<dbReference type="InterPro" id="IPR049816">
    <property type="entry name" value="McdB"/>
</dbReference>
<comment type="function">
    <text evidence="1">McdA and McdB together mediate carboxysome (Cb) spacing, size, ultrastructure and probably inheritance in the cell, together they prevent Cb aggregation. McdA is an ATPase that forms dynamic gradients on the nucleoid in response to adapter protein McdB, which associates with carboxysomes. The interplay between McdA gradients on the nucleoid and McdB-bound carboxysomes result in the equal spacing of Cbs along the cell length. Stimulates the ATPase activity of McdA, causing McdA to be released from DNA. Undergoes liquid-liquid phase separation.</text>
</comment>
<comment type="function">
    <text evidence="1">Incorrect positioning (aggregation) of carboxysomes results in reduced CO(2) fixation by encapsulated ribulose-1,5-bisphosphate carboxylase (RuBisCO, cbbL/cbbS), which leads to slower growth.</text>
</comment>
<comment type="subunit">
    <text evidence="1 3">Homodimerizes; may exist in higher order oligomers in solution. Forms a complex with McdA:DNA (PubMed:31106331). Homohexamerizes, interacts with shell components of the carboxysome (By similarity).</text>
</comment>
<comment type="subcellular location">
    <subcellularLocation>
        <location evidence="1">Carboxysome</location>
    </subcellularLocation>
</comment>
<comment type="miscellaneous">
    <text evidence="5">A type 1 McdB protein.</text>
</comment>
<organism>
    <name type="scientific">Gloeothece citriformis (strain PCC 7424)</name>
    <name type="common">Cyanothece sp. (strain PCC 7424)</name>
    <dbReference type="NCBI Taxonomy" id="65393"/>
    <lineage>
        <taxon>Bacteria</taxon>
        <taxon>Bacillati</taxon>
        <taxon>Cyanobacteriota</taxon>
        <taxon>Cyanophyceae</taxon>
        <taxon>Oscillatoriophycideae</taxon>
        <taxon>Chroococcales</taxon>
        <taxon>Aphanothecaceae</taxon>
        <taxon>Gloeothece</taxon>
        <taxon>Gloeothece citriformis</taxon>
    </lineage>
</organism>
<feature type="chain" id="PRO_0000459778" description="Maintenance of carboxysome distribution protein B">
    <location>
        <begin position="1"/>
        <end position="156"/>
    </location>
</feature>
<feature type="region of interest" description="Disordered" evidence="2">
    <location>
        <begin position="1"/>
        <end position="79"/>
    </location>
</feature>
<feature type="region of interest" description="Required for interaction with McdA:DNA complex" evidence="3">
    <location>
        <begin position="1"/>
        <end position="55"/>
    </location>
</feature>
<feature type="coiled-coil region" evidence="3 7">
    <location>
        <begin position="122"/>
        <end position="156"/>
    </location>
</feature>
<feature type="compositionally biased region" description="Polar residues" evidence="2">
    <location>
        <begin position="24"/>
        <end position="50"/>
    </location>
</feature>
<feature type="compositionally biased region" description="Basic and acidic residues" evidence="2">
    <location>
        <begin position="51"/>
        <end position="63"/>
    </location>
</feature>
<feature type="helix" evidence="9">
    <location>
        <begin position="90"/>
        <end position="101"/>
    </location>
</feature>
<feature type="turn" evidence="9">
    <location>
        <begin position="102"/>
        <end position="104"/>
    </location>
</feature>
<feature type="helix" evidence="9">
    <location>
        <begin position="107"/>
        <end position="119"/>
    </location>
</feature>
<feature type="helix" evidence="9">
    <location>
        <begin position="122"/>
        <end position="155"/>
    </location>
</feature>
<accession>B7KMS5</accession>
<name>MCDB_GLOC7</name>
<proteinExistence type="evidence at protein level"/>
<geneLocation type="plasmid">
    <name>pP742402</name>
</geneLocation>